<gene>
    <name type="ordered locus">FTW_0267</name>
</gene>
<accession>A4IWC7</accession>
<name>Y267_FRATW</name>
<reference key="1">
    <citation type="journal article" date="2007" name="PLoS ONE">
        <title>Complete genomic characterization of a pathogenic A.II strain of Francisella tularensis subspecies tularensis.</title>
        <authorList>
            <person name="Beckstrom-Sternberg S.M."/>
            <person name="Auerbach R.K."/>
            <person name="Godbole S."/>
            <person name="Pearson J.V."/>
            <person name="Beckstrom-Sternberg J.S."/>
            <person name="Deng Z."/>
            <person name="Munk C."/>
            <person name="Kubota K."/>
            <person name="Zhou Y."/>
            <person name="Bruce D."/>
            <person name="Noronha J."/>
            <person name="Scheuermann R.H."/>
            <person name="Wang A."/>
            <person name="Wei X."/>
            <person name="Wang J."/>
            <person name="Hao J."/>
            <person name="Wagner D.M."/>
            <person name="Brettin T.S."/>
            <person name="Brown N."/>
            <person name="Gilna P."/>
            <person name="Keim P.S."/>
        </authorList>
    </citation>
    <scope>NUCLEOTIDE SEQUENCE [LARGE SCALE GENOMIC DNA]</scope>
    <source>
        <strain>WY96-3418</strain>
    </source>
</reference>
<protein>
    <recommendedName>
        <fullName evidence="1">UPF0246 protein FTW_0267</fullName>
    </recommendedName>
</protein>
<proteinExistence type="inferred from homology"/>
<feature type="chain" id="PRO_1000061604" description="UPF0246 protein FTW_0267">
    <location>
        <begin position="1"/>
        <end position="254"/>
    </location>
</feature>
<evidence type="ECO:0000255" key="1">
    <source>
        <dbReference type="HAMAP-Rule" id="MF_00652"/>
    </source>
</evidence>
<dbReference type="EMBL" id="CP000608">
    <property type="protein sequence ID" value="ABO46229.1"/>
    <property type="molecule type" value="Genomic_DNA"/>
</dbReference>
<dbReference type="SMR" id="A4IWC7"/>
<dbReference type="KEGG" id="ftw:FTW_0267"/>
<dbReference type="HOGENOM" id="CLU_061989_0_0_6"/>
<dbReference type="GO" id="GO:0005829">
    <property type="term" value="C:cytosol"/>
    <property type="evidence" value="ECO:0007669"/>
    <property type="project" value="TreeGrafter"/>
</dbReference>
<dbReference type="GO" id="GO:0033194">
    <property type="term" value="P:response to hydroperoxide"/>
    <property type="evidence" value="ECO:0007669"/>
    <property type="project" value="TreeGrafter"/>
</dbReference>
<dbReference type="HAMAP" id="MF_00652">
    <property type="entry name" value="UPF0246"/>
    <property type="match status" value="1"/>
</dbReference>
<dbReference type="InterPro" id="IPR005583">
    <property type="entry name" value="YaaA"/>
</dbReference>
<dbReference type="NCBIfam" id="NF002542">
    <property type="entry name" value="PRK02101.1-3"/>
    <property type="match status" value="1"/>
</dbReference>
<dbReference type="PANTHER" id="PTHR30283:SF4">
    <property type="entry name" value="PEROXIDE STRESS RESISTANCE PROTEIN YAAA"/>
    <property type="match status" value="1"/>
</dbReference>
<dbReference type="PANTHER" id="PTHR30283">
    <property type="entry name" value="PEROXIDE STRESS RESPONSE PROTEIN YAAA"/>
    <property type="match status" value="1"/>
</dbReference>
<dbReference type="Pfam" id="PF03883">
    <property type="entry name" value="H2O2_YaaD"/>
    <property type="match status" value="1"/>
</dbReference>
<comment type="similarity">
    <text evidence="1">Belongs to the UPF0246 family.</text>
</comment>
<sequence length="254" mass="29399">MIIVISPAKSQNFEPIKTAYQFTQPIFKQQIIKLINILKHYEVEEIEKLMKISPKLAEEVFAKHNSFNPNKYDNSNAKAAIFTFNGDVYKGLEADTLDNKTIEYAQNHLLMLSGLYGLVRPLDLIQAYRLEMGTNIKIDGKILHKYWQDKITTQLNEYFSQQQNKILINLASNEYSQAIDKKSLAVKWLDIDFKENKAGAYKTIGIHAKKARGLMTRYILENRIENVSDIKKFNVAGYQFNPDFSDENLLCFTR</sequence>
<organism>
    <name type="scientific">Francisella tularensis subsp. tularensis (strain WY96-3418)</name>
    <dbReference type="NCBI Taxonomy" id="418136"/>
    <lineage>
        <taxon>Bacteria</taxon>
        <taxon>Pseudomonadati</taxon>
        <taxon>Pseudomonadota</taxon>
        <taxon>Gammaproteobacteria</taxon>
        <taxon>Thiotrichales</taxon>
        <taxon>Francisellaceae</taxon>
        <taxon>Francisella</taxon>
    </lineage>
</organism>